<accession>O86331</accession>
<accession>F2GNQ8</accession>
<accession>I6Y8T0</accession>
<name>Y792_MYCTU</name>
<gene>
    <name evidence="4" type="ordered locus">Rv0792c</name>
</gene>
<sequence length="269" mass="28959">MTSVKLDLDAADLRISRGSVPASTQLAEALKAQIIQQRLPRGGRLPSERELIDRSGLSRVTVRAAVGMLQRQGWLVRRQGLGTFVADPVEQELSCGVRTITEVLLSCGVTPQVDVLSHQTGPAPQRISETLGLVEVLCIRRRIRTGDQPLALVTAYLPPGVGPAVEPLLSGSADTETTYAMWERRLGVRIAQATHEIHAAGASPDVADALGLAVGSPVLVVDRTSYTNDGKPLEVVVFHHRPERYQFSVTLPRTLPGSGAGIIEKRDFA</sequence>
<evidence type="ECO:0000255" key="1">
    <source>
        <dbReference type="PROSITE-ProRule" id="PRU00307"/>
    </source>
</evidence>
<evidence type="ECO:0000269" key="2">
    <source>
    </source>
</evidence>
<evidence type="ECO:0000305" key="3"/>
<evidence type="ECO:0000312" key="4">
    <source>
        <dbReference type="EMBL" id="CCP43540.1"/>
    </source>
</evidence>
<comment type="function">
    <text evidence="2">Transcriptional regulator required for survival in oxidative stress and for establishing infection in host tissues (PubMed:36507689). Regulates the expression of a subset of genes involved in oxidative stress adaptation and virulence, enabling the bacteria to adapt and persist in host tissues (PubMed:36507689).</text>
</comment>
<comment type="activity regulation">
    <text evidence="2">DNA-binding activity is increased in the presence of L-arabinose and inhibited by the small molecule I-OMe-Tyrphostin.</text>
</comment>
<comment type="subunit">
    <text evidence="2">Homodimer.</text>
</comment>
<comment type="induction">
    <text evidence="2">Binds to its own promoter and probably autoregulates its expression.</text>
</comment>
<comment type="domain">
    <text evidence="2">The N-terminal domain binds DNA and the C-terminal region plays a pivotal role in dimer formation.</text>
</comment>
<comment type="disruption phenotype">
    <text evidence="2">Deletion mutant is compromised for survival upon exposure to oxidative stress and infection in guinea pigs (PubMed:36507689). Deletion of the gene does not affect colony morphology, growth pattern, biofilm formation and sensitivity to isoniazid, rifampicin, levofloxacin and ethambutol (PubMed:36507689). About 200 genes are differentially expressed in the mutant strain in comparison to the wild-type strain (PubMed:36507689).</text>
</comment>
<dbReference type="EMBL" id="AL123456">
    <property type="protein sequence ID" value="CCP43540.1"/>
    <property type="molecule type" value="Genomic_DNA"/>
</dbReference>
<dbReference type="RefSeq" id="NP_215307.1">
    <property type="nucleotide sequence ID" value="NC_000962.3"/>
</dbReference>
<dbReference type="RefSeq" id="WP_003404007.1">
    <property type="nucleotide sequence ID" value="NZ_NVQJ01000035.1"/>
</dbReference>
<dbReference type="SASBDB" id="O86331"/>
<dbReference type="SMR" id="O86331"/>
<dbReference type="FunCoup" id="O86331">
    <property type="interactions" value="5"/>
</dbReference>
<dbReference type="STRING" id="83332.Rv0792c"/>
<dbReference type="PaxDb" id="83332-Rv0792c"/>
<dbReference type="DNASU" id="885142"/>
<dbReference type="GeneID" id="885142"/>
<dbReference type="KEGG" id="mtu:Rv0792c"/>
<dbReference type="KEGG" id="mtv:RVBD_0792c"/>
<dbReference type="PATRIC" id="fig|83332.111.peg.878"/>
<dbReference type="TubercuList" id="Rv0792c"/>
<dbReference type="eggNOG" id="COG2188">
    <property type="taxonomic scope" value="Bacteria"/>
</dbReference>
<dbReference type="InParanoid" id="O86331"/>
<dbReference type="OrthoDB" id="8584262at2"/>
<dbReference type="PhylomeDB" id="O86331"/>
<dbReference type="Proteomes" id="UP000001584">
    <property type="component" value="Chromosome"/>
</dbReference>
<dbReference type="GO" id="GO:0003677">
    <property type="term" value="F:DNA binding"/>
    <property type="evidence" value="ECO:0007669"/>
    <property type="project" value="UniProtKB-KW"/>
</dbReference>
<dbReference type="GO" id="GO:0003700">
    <property type="term" value="F:DNA-binding transcription factor activity"/>
    <property type="evidence" value="ECO:0007669"/>
    <property type="project" value="InterPro"/>
</dbReference>
<dbReference type="GO" id="GO:0045892">
    <property type="term" value="P:negative regulation of DNA-templated transcription"/>
    <property type="evidence" value="ECO:0000318"/>
    <property type="project" value="GO_Central"/>
</dbReference>
<dbReference type="CDD" id="cd07377">
    <property type="entry name" value="WHTH_GntR"/>
    <property type="match status" value="1"/>
</dbReference>
<dbReference type="FunFam" id="1.10.10.10:FF:000701">
    <property type="entry name" value="GntR family transcriptional regulator"/>
    <property type="match status" value="1"/>
</dbReference>
<dbReference type="Gene3D" id="3.40.1410.10">
    <property type="entry name" value="Chorismate lyase-like"/>
    <property type="match status" value="1"/>
</dbReference>
<dbReference type="Gene3D" id="1.10.10.10">
    <property type="entry name" value="Winged helix-like DNA-binding domain superfamily/Winged helix DNA-binding domain"/>
    <property type="match status" value="1"/>
</dbReference>
<dbReference type="InterPro" id="IPR050679">
    <property type="entry name" value="Bact_HTH_transcr_reg"/>
</dbReference>
<dbReference type="InterPro" id="IPR028978">
    <property type="entry name" value="Chorismate_lyase_/UTRA_dom_sf"/>
</dbReference>
<dbReference type="InterPro" id="IPR000524">
    <property type="entry name" value="Tscrpt_reg_HTH_GntR"/>
</dbReference>
<dbReference type="InterPro" id="IPR011663">
    <property type="entry name" value="UTRA"/>
</dbReference>
<dbReference type="InterPro" id="IPR036388">
    <property type="entry name" value="WH-like_DNA-bd_sf"/>
</dbReference>
<dbReference type="InterPro" id="IPR036390">
    <property type="entry name" value="WH_DNA-bd_sf"/>
</dbReference>
<dbReference type="PANTHER" id="PTHR44846">
    <property type="entry name" value="MANNOSYL-D-GLYCERATE TRANSPORT/METABOLISM SYSTEM REPRESSOR MNGR-RELATED"/>
    <property type="match status" value="1"/>
</dbReference>
<dbReference type="PANTHER" id="PTHR44846:SF1">
    <property type="entry name" value="MANNOSYL-D-GLYCERATE TRANSPORT_METABOLISM SYSTEM REPRESSOR MNGR-RELATED"/>
    <property type="match status" value="1"/>
</dbReference>
<dbReference type="Pfam" id="PF00392">
    <property type="entry name" value="GntR"/>
    <property type="match status" value="1"/>
</dbReference>
<dbReference type="Pfam" id="PF07702">
    <property type="entry name" value="UTRA"/>
    <property type="match status" value="1"/>
</dbReference>
<dbReference type="PRINTS" id="PR00035">
    <property type="entry name" value="HTHGNTR"/>
</dbReference>
<dbReference type="SMART" id="SM00345">
    <property type="entry name" value="HTH_GNTR"/>
    <property type="match status" value="1"/>
</dbReference>
<dbReference type="SMART" id="SM00866">
    <property type="entry name" value="UTRA"/>
    <property type="match status" value="1"/>
</dbReference>
<dbReference type="SUPFAM" id="SSF64288">
    <property type="entry name" value="Chorismate lyase-like"/>
    <property type="match status" value="1"/>
</dbReference>
<dbReference type="SUPFAM" id="SSF46785">
    <property type="entry name" value="Winged helix' DNA-binding domain"/>
    <property type="match status" value="1"/>
</dbReference>
<dbReference type="PROSITE" id="PS50949">
    <property type="entry name" value="HTH_GNTR"/>
    <property type="match status" value="1"/>
</dbReference>
<keyword id="KW-0238">DNA-binding</keyword>
<keyword id="KW-1185">Reference proteome</keyword>
<keyword id="KW-0346">Stress response</keyword>
<keyword id="KW-0804">Transcription</keyword>
<keyword id="KW-0805">Transcription regulation</keyword>
<keyword id="KW-0843">Virulence</keyword>
<feature type="chain" id="PRO_0000458144" description="HTH-type transcriptional regulator Rv0792c">
    <location>
        <begin position="1"/>
        <end position="269"/>
    </location>
</feature>
<feature type="domain" description="HTH gntR-type" evidence="1">
    <location>
        <begin position="20"/>
        <end position="88"/>
    </location>
</feature>
<feature type="DNA-binding region" description="H-T-H motif" evidence="1">
    <location>
        <begin position="48"/>
        <end position="67"/>
    </location>
</feature>
<feature type="mutagenesis site" description="Decreases binding to DNA." evidence="2">
    <original>R</original>
    <variation>A</variation>
    <location>
        <position position="49"/>
    </location>
</feature>
<feature type="mutagenesis site" description="Decreases binding to DNA." evidence="2">
    <original>G</original>
    <variation>D</variation>
    <location>
        <position position="80"/>
    </location>
</feature>
<reference key="1">
    <citation type="journal article" date="1998" name="Nature">
        <title>Deciphering the biology of Mycobacterium tuberculosis from the complete genome sequence.</title>
        <authorList>
            <person name="Cole S.T."/>
            <person name="Brosch R."/>
            <person name="Parkhill J."/>
            <person name="Garnier T."/>
            <person name="Churcher C.M."/>
            <person name="Harris D.E."/>
            <person name="Gordon S.V."/>
            <person name="Eiglmeier K."/>
            <person name="Gas S."/>
            <person name="Barry C.E. III"/>
            <person name="Tekaia F."/>
            <person name="Badcock K."/>
            <person name="Basham D."/>
            <person name="Brown D."/>
            <person name="Chillingworth T."/>
            <person name="Connor R."/>
            <person name="Davies R.M."/>
            <person name="Devlin K."/>
            <person name="Feltwell T."/>
            <person name="Gentles S."/>
            <person name="Hamlin N."/>
            <person name="Holroyd S."/>
            <person name="Hornsby T."/>
            <person name="Jagels K."/>
            <person name="Krogh A."/>
            <person name="McLean J."/>
            <person name="Moule S."/>
            <person name="Murphy L.D."/>
            <person name="Oliver S."/>
            <person name="Osborne J."/>
            <person name="Quail M.A."/>
            <person name="Rajandream M.A."/>
            <person name="Rogers J."/>
            <person name="Rutter S."/>
            <person name="Seeger K."/>
            <person name="Skelton S."/>
            <person name="Squares S."/>
            <person name="Squares R."/>
            <person name="Sulston J.E."/>
            <person name="Taylor K."/>
            <person name="Whitehead S."/>
            <person name="Barrell B.G."/>
        </authorList>
    </citation>
    <scope>NUCLEOTIDE SEQUENCE [LARGE SCALE GENOMIC DNA]</scope>
    <source>
        <strain>ATCC 25618 / H37Rv</strain>
    </source>
</reference>
<reference key="2">
    <citation type="journal article" date="2011" name="Mol. Cell. Proteomics">
        <title>Proteogenomic analysis of Mycobacterium tuberculosis by high resolution mass spectrometry.</title>
        <authorList>
            <person name="Kelkar D.S."/>
            <person name="Kumar D."/>
            <person name="Kumar P."/>
            <person name="Balakrishnan L."/>
            <person name="Muthusamy B."/>
            <person name="Yadav A.K."/>
            <person name="Shrivastava P."/>
            <person name="Marimuthu A."/>
            <person name="Anand S."/>
            <person name="Sundaram H."/>
            <person name="Kingsbury R."/>
            <person name="Harsha H.C."/>
            <person name="Nair B."/>
            <person name="Prasad T.S."/>
            <person name="Chauhan D.S."/>
            <person name="Katoch K."/>
            <person name="Katoch V.M."/>
            <person name="Kumar P."/>
            <person name="Chaerkady R."/>
            <person name="Ramachandran S."/>
            <person name="Dash D."/>
            <person name="Pandey A."/>
        </authorList>
    </citation>
    <scope>IDENTIFICATION BY MASS SPECTROMETRY [LARGE SCALE ANALYSIS]</scope>
    <source>
        <strain>ATCC 25618 / H37Rv</strain>
    </source>
</reference>
<reference key="3">
    <citation type="journal article" date="2023" name="Microbiol. Spectr.">
        <title>Structural and functional characterization of Rv0792c from Mycobacterium tuberculosis: identifying small molecule inhibitor against HutC protein.</title>
        <authorList>
            <person name="Chauhan N.K."/>
            <person name="Anand A."/>
            <person name="Sharma A."/>
            <person name="Dhiman K."/>
            <person name="Gosain T.P."/>
            <person name="Singh P."/>
            <person name="Singh P."/>
            <person name="Khan E."/>
            <person name="Chattopadhyay G."/>
            <person name="Kumar A."/>
            <person name="Sharma D."/>
            <person name="Ashish X."/>
            <person name="Sharma T.K."/>
            <person name="Singh R."/>
        </authorList>
    </citation>
    <scope>FUNCTION</scope>
    <scope>DNA-BINDING</scope>
    <scope>ACTIVITY REGULATION</scope>
    <scope>SUBUNIT</scope>
    <scope>INDUCTION</scope>
    <scope>DOMAIN</scope>
    <scope>DISRUPTION PHENOTYPE</scope>
    <scope>MUTAGENESIS OF ARG-49 AND GLY-80</scope>
    <source>
        <strain>H37Rv</strain>
    </source>
</reference>
<proteinExistence type="evidence at protein level"/>
<organism>
    <name type="scientific">Mycobacterium tuberculosis (strain ATCC 25618 / H37Rv)</name>
    <dbReference type="NCBI Taxonomy" id="83332"/>
    <lineage>
        <taxon>Bacteria</taxon>
        <taxon>Bacillati</taxon>
        <taxon>Actinomycetota</taxon>
        <taxon>Actinomycetes</taxon>
        <taxon>Mycobacteriales</taxon>
        <taxon>Mycobacteriaceae</taxon>
        <taxon>Mycobacterium</taxon>
        <taxon>Mycobacterium tuberculosis complex</taxon>
    </lineage>
</organism>
<protein>
    <recommendedName>
        <fullName evidence="3">HTH-type transcriptional regulator Rv0792c</fullName>
    </recommendedName>
</protein>